<keyword id="KW-0963">Cytoplasm</keyword>
<keyword id="KW-0269">Exonuclease</keyword>
<keyword id="KW-0378">Hydrolase</keyword>
<keyword id="KW-0540">Nuclease</keyword>
<reference key="1">
    <citation type="submission" date="2007-09" db="EMBL/GenBank/DDBJ databases">
        <title>Complete sequence of chromosome of Serratia proteamaculans 568.</title>
        <authorList>
            <consortium name="US DOE Joint Genome Institute"/>
            <person name="Copeland A."/>
            <person name="Lucas S."/>
            <person name="Lapidus A."/>
            <person name="Barry K."/>
            <person name="Glavina del Rio T."/>
            <person name="Dalin E."/>
            <person name="Tice H."/>
            <person name="Pitluck S."/>
            <person name="Chain P."/>
            <person name="Malfatti S."/>
            <person name="Shin M."/>
            <person name="Vergez L."/>
            <person name="Schmutz J."/>
            <person name="Larimer F."/>
            <person name="Land M."/>
            <person name="Hauser L."/>
            <person name="Kyrpides N."/>
            <person name="Kim E."/>
            <person name="Taghavi S."/>
            <person name="Newman L."/>
            <person name="Vangronsveld J."/>
            <person name="van der Lelie D."/>
            <person name="Richardson P."/>
        </authorList>
    </citation>
    <scope>NUCLEOTIDE SEQUENCE [LARGE SCALE GENOMIC DNA]</scope>
    <source>
        <strain>568</strain>
    </source>
</reference>
<dbReference type="EC" id="3.1.11.6" evidence="1"/>
<dbReference type="EMBL" id="CP000826">
    <property type="protein sequence ID" value="ABV42693.1"/>
    <property type="molecule type" value="Genomic_DNA"/>
</dbReference>
<dbReference type="SMR" id="A8GHV3"/>
<dbReference type="STRING" id="399741.Spro_3597"/>
<dbReference type="KEGG" id="spe:Spro_3597"/>
<dbReference type="eggNOG" id="COG1570">
    <property type="taxonomic scope" value="Bacteria"/>
</dbReference>
<dbReference type="HOGENOM" id="CLU_023625_3_1_6"/>
<dbReference type="OrthoDB" id="9802795at2"/>
<dbReference type="GO" id="GO:0005737">
    <property type="term" value="C:cytoplasm"/>
    <property type="evidence" value="ECO:0007669"/>
    <property type="project" value="UniProtKB-SubCell"/>
</dbReference>
<dbReference type="GO" id="GO:0009318">
    <property type="term" value="C:exodeoxyribonuclease VII complex"/>
    <property type="evidence" value="ECO:0007669"/>
    <property type="project" value="InterPro"/>
</dbReference>
<dbReference type="GO" id="GO:0008855">
    <property type="term" value="F:exodeoxyribonuclease VII activity"/>
    <property type="evidence" value="ECO:0007669"/>
    <property type="project" value="UniProtKB-UniRule"/>
</dbReference>
<dbReference type="GO" id="GO:0003676">
    <property type="term" value="F:nucleic acid binding"/>
    <property type="evidence" value="ECO:0007669"/>
    <property type="project" value="InterPro"/>
</dbReference>
<dbReference type="GO" id="GO:0006308">
    <property type="term" value="P:DNA catabolic process"/>
    <property type="evidence" value="ECO:0007669"/>
    <property type="project" value="UniProtKB-UniRule"/>
</dbReference>
<dbReference type="CDD" id="cd04489">
    <property type="entry name" value="ExoVII_LU_OBF"/>
    <property type="match status" value="1"/>
</dbReference>
<dbReference type="HAMAP" id="MF_00378">
    <property type="entry name" value="Exonuc_7_L"/>
    <property type="match status" value="1"/>
</dbReference>
<dbReference type="InterPro" id="IPR003753">
    <property type="entry name" value="Exonuc_VII_L"/>
</dbReference>
<dbReference type="InterPro" id="IPR020579">
    <property type="entry name" value="Exonuc_VII_lsu_C"/>
</dbReference>
<dbReference type="InterPro" id="IPR025824">
    <property type="entry name" value="OB-fold_nuc-bd_dom"/>
</dbReference>
<dbReference type="NCBIfam" id="TIGR00237">
    <property type="entry name" value="xseA"/>
    <property type="match status" value="1"/>
</dbReference>
<dbReference type="PANTHER" id="PTHR30008">
    <property type="entry name" value="EXODEOXYRIBONUCLEASE 7 LARGE SUBUNIT"/>
    <property type="match status" value="1"/>
</dbReference>
<dbReference type="PANTHER" id="PTHR30008:SF0">
    <property type="entry name" value="EXODEOXYRIBONUCLEASE 7 LARGE SUBUNIT"/>
    <property type="match status" value="1"/>
</dbReference>
<dbReference type="Pfam" id="PF02601">
    <property type="entry name" value="Exonuc_VII_L"/>
    <property type="match status" value="1"/>
</dbReference>
<dbReference type="Pfam" id="PF13742">
    <property type="entry name" value="tRNA_anti_2"/>
    <property type="match status" value="1"/>
</dbReference>
<gene>
    <name evidence="1" type="primary">xseA</name>
    <name type="ordered locus">Spro_3597</name>
</gene>
<proteinExistence type="inferred from homology"/>
<protein>
    <recommendedName>
        <fullName evidence="1">Exodeoxyribonuclease 7 large subunit</fullName>
        <ecNumber evidence="1">3.1.11.6</ecNumber>
    </recommendedName>
    <alternativeName>
        <fullName evidence="1">Exodeoxyribonuclease VII large subunit</fullName>
        <shortName evidence="1">Exonuclease VII large subunit</shortName>
    </alternativeName>
</protein>
<evidence type="ECO:0000255" key="1">
    <source>
        <dbReference type="HAMAP-Rule" id="MF_00378"/>
    </source>
</evidence>
<sequence>MSLPVSPSIFTVSRLNQTVRQLLEMEMGQIWLSAEISNFSQPSSGHWYFTLKDDRAQVRCAMFRNTNRRTTFRPQNGQQVLVRASITLYEPRGDYQLIAESMQPAGDGLLQQQFDQLKQRLSAEGLFDQQFKQPLPSPAKRVGVITSASGAALHDVLQVLQRRDPSLPIIIYPTSVQGAEAPLQIVRAIETANRRDECDVLIVGRGGGSLEDLWSFNDERVARAIFASRIPIVSAVGHETDVTIADFVADLRAPTPSAAAELVSRNQLELLRQLQSQQQRMEMAMDYYLAQRQQQFTRINHRLQQQHPHLRLARQQTLLFKLQRRLEDGMQNQLRLSSRRSERAQQRLAQMQPQARIHRYQQRVQQQEYRLQQALERQLNAWRQRFGVACSQLEAVSPLATLARGYSVTQTPRGELLKTTKQAQVGELLKTRLQDGWVESEVKTITLAKKPRKKRAAE</sequence>
<name>EX7L_SERP5</name>
<organism>
    <name type="scientific">Serratia proteamaculans (strain 568)</name>
    <dbReference type="NCBI Taxonomy" id="399741"/>
    <lineage>
        <taxon>Bacteria</taxon>
        <taxon>Pseudomonadati</taxon>
        <taxon>Pseudomonadota</taxon>
        <taxon>Gammaproteobacteria</taxon>
        <taxon>Enterobacterales</taxon>
        <taxon>Yersiniaceae</taxon>
        <taxon>Serratia</taxon>
    </lineage>
</organism>
<comment type="function">
    <text evidence="1">Bidirectionally degrades single-stranded DNA into large acid-insoluble oligonucleotides, which are then degraded further into small acid-soluble oligonucleotides.</text>
</comment>
<comment type="catalytic activity">
    <reaction evidence="1">
        <text>Exonucleolytic cleavage in either 5'- to 3'- or 3'- to 5'-direction to yield nucleoside 5'-phosphates.</text>
        <dbReference type="EC" id="3.1.11.6"/>
    </reaction>
</comment>
<comment type="subunit">
    <text evidence="1">Heterooligomer composed of large and small subunits.</text>
</comment>
<comment type="subcellular location">
    <subcellularLocation>
        <location evidence="1">Cytoplasm</location>
    </subcellularLocation>
</comment>
<comment type="similarity">
    <text evidence="1">Belongs to the XseA family.</text>
</comment>
<feature type="chain" id="PRO_1000060031" description="Exodeoxyribonuclease 7 large subunit">
    <location>
        <begin position="1"/>
        <end position="458"/>
    </location>
</feature>
<accession>A8GHV3</accession>